<sequence>MTDLQNIEPQALRKLIRDKKVTGHTSGMAKGYIQANVVILPLDYAYDFLKFCFKNPKTCPLLDISEVGEVNFSKYGKDADITTDVGAYRVYENGELIETPTDVKHLFNDQMVSFLIGCSFTFEHALLEAGIPLRHLEEGHNVPMYITNIPAEPAGRFEGNITVSMRPMTMKDAIRATEITTHFKNVHGTPIHIGNPADFGIKDLENPDFGEPVKIKDNEVPVFWGCGVTPQSVALDAKPELIITHAPGHMFITDVKDSELSD</sequence>
<name>Y2211_STACT</name>
<accession>B9DJR3</accession>
<organism>
    <name type="scientific">Staphylococcus carnosus (strain TM300)</name>
    <dbReference type="NCBI Taxonomy" id="396513"/>
    <lineage>
        <taxon>Bacteria</taxon>
        <taxon>Bacillati</taxon>
        <taxon>Bacillota</taxon>
        <taxon>Bacilli</taxon>
        <taxon>Bacillales</taxon>
        <taxon>Staphylococcaceae</taxon>
        <taxon>Staphylococcus</taxon>
    </lineage>
</organism>
<protein>
    <recommendedName>
        <fullName evidence="1">Putative hydro-lyase Sca_2211</fullName>
        <ecNumber evidence="1">4.2.1.-</ecNumber>
    </recommendedName>
</protein>
<evidence type="ECO:0000255" key="1">
    <source>
        <dbReference type="HAMAP-Rule" id="MF_01830"/>
    </source>
</evidence>
<dbReference type="EC" id="4.2.1.-" evidence="1"/>
<dbReference type="EMBL" id="AM295250">
    <property type="protein sequence ID" value="CAL29113.1"/>
    <property type="molecule type" value="Genomic_DNA"/>
</dbReference>
<dbReference type="RefSeq" id="WP_015901449.1">
    <property type="nucleotide sequence ID" value="NC_012121.1"/>
</dbReference>
<dbReference type="SMR" id="B9DJR3"/>
<dbReference type="GeneID" id="93794662"/>
<dbReference type="KEGG" id="sca:SCA_2211"/>
<dbReference type="eggNOG" id="COG4336">
    <property type="taxonomic scope" value="Bacteria"/>
</dbReference>
<dbReference type="HOGENOM" id="CLU_059759_0_0_9"/>
<dbReference type="OrthoDB" id="149585at2"/>
<dbReference type="BioCyc" id="SCAR396513:SCA_RS11150-MONOMER"/>
<dbReference type="Proteomes" id="UP000000444">
    <property type="component" value="Chromosome"/>
</dbReference>
<dbReference type="GO" id="GO:0016829">
    <property type="term" value="F:lyase activity"/>
    <property type="evidence" value="ECO:0007669"/>
    <property type="project" value="UniProtKB-KW"/>
</dbReference>
<dbReference type="FunFam" id="3.30.2040.10:FF:000001">
    <property type="entry name" value="D-glutamate cyclase, mitochondrial"/>
    <property type="match status" value="1"/>
</dbReference>
<dbReference type="Gene3D" id="3.40.1640.10">
    <property type="entry name" value="PSTPO5379-like"/>
    <property type="match status" value="1"/>
</dbReference>
<dbReference type="Gene3D" id="3.30.2040.10">
    <property type="entry name" value="PSTPO5379-like domain"/>
    <property type="match status" value="1"/>
</dbReference>
<dbReference type="HAMAP" id="MF_01830">
    <property type="entry name" value="Hydro_lyase"/>
    <property type="match status" value="1"/>
</dbReference>
<dbReference type="InterPro" id="IPR009906">
    <property type="entry name" value="D-Glu_cyclase"/>
</dbReference>
<dbReference type="InterPro" id="IPR038021">
    <property type="entry name" value="Putative_hydro-lyase"/>
</dbReference>
<dbReference type="InterPro" id="IPR016938">
    <property type="entry name" value="UPF0317"/>
</dbReference>
<dbReference type="NCBIfam" id="NF003969">
    <property type="entry name" value="PRK05463.1"/>
    <property type="match status" value="1"/>
</dbReference>
<dbReference type="PANTHER" id="PTHR32022">
    <property type="entry name" value="D-GLUTAMATE CYCLASE, MITOCHONDRIAL"/>
    <property type="match status" value="1"/>
</dbReference>
<dbReference type="PANTHER" id="PTHR32022:SF10">
    <property type="entry name" value="D-GLUTAMATE CYCLASE, MITOCHONDRIAL"/>
    <property type="match status" value="1"/>
</dbReference>
<dbReference type="Pfam" id="PF07286">
    <property type="entry name" value="D-Glu_cyclase"/>
    <property type="match status" value="1"/>
</dbReference>
<dbReference type="PIRSF" id="PIRSF029755">
    <property type="entry name" value="UCP029755"/>
    <property type="match status" value="1"/>
</dbReference>
<dbReference type="SUPFAM" id="SSF160920">
    <property type="entry name" value="PSTPO5379-like"/>
    <property type="match status" value="1"/>
</dbReference>
<reference key="1">
    <citation type="journal article" date="2009" name="Appl. Environ. Microbiol.">
        <title>Genome analysis of the meat starter culture bacterium Staphylococcus carnosus TM300.</title>
        <authorList>
            <person name="Rosenstein R."/>
            <person name="Nerz C."/>
            <person name="Biswas L."/>
            <person name="Resch A."/>
            <person name="Raddatz G."/>
            <person name="Schuster S.C."/>
            <person name="Goetz F."/>
        </authorList>
    </citation>
    <scope>NUCLEOTIDE SEQUENCE [LARGE SCALE GENOMIC DNA]</scope>
    <source>
        <strain>TM300</strain>
    </source>
</reference>
<gene>
    <name type="ordered locus">Sca_2211</name>
</gene>
<comment type="similarity">
    <text evidence="1">Belongs to the D-glutamate cyclase family.</text>
</comment>
<keyword id="KW-0456">Lyase</keyword>
<keyword id="KW-1185">Reference proteome</keyword>
<proteinExistence type="inferred from homology"/>
<feature type="chain" id="PRO_0000379866" description="Putative hydro-lyase Sca_2211">
    <location>
        <begin position="1"/>
        <end position="262"/>
    </location>
</feature>